<feature type="chain" id="PRO_0000274499" description="Coiled-coil domain-containing protein 190">
    <location>
        <begin position="1"/>
        <end position="288"/>
    </location>
</feature>
<feature type="region of interest" description="Disordered" evidence="2">
    <location>
        <begin position="141"/>
        <end position="235"/>
    </location>
</feature>
<feature type="coiled-coil region" evidence="1">
    <location>
        <begin position="16"/>
        <end position="69"/>
    </location>
</feature>
<feature type="compositionally biased region" description="Basic and acidic residues" evidence="2">
    <location>
        <begin position="177"/>
        <end position="188"/>
    </location>
</feature>
<feature type="compositionally biased region" description="Polar residues" evidence="2">
    <location>
        <begin position="203"/>
        <end position="213"/>
    </location>
</feature>
<gene>
    <name type="primary">Ccdc190</name>
</gene>
<proteinExistence type="evidence at transcript level"/>
<protein>
    <recommendedName>
        <fullName>Coiled-coil domain-containing protein 190</fullName>
    </recommendedName>
</protein>
<keyword id="KW-0175">Coiled coil</keyword>
<keyword id="KW-1185">Reference proteome</keyword>
<organism>
    <name type="scientific">Mus musculus</name>
    <name type="common">Mouse</name>
    <dbReference type="NCBI Taxonomy" id="10090"/>
    <lineage>
        <taxon>Eukaryota</taxon>
        <taxon>Metazoa</taxon>
        <taxon>Chordata</taxon>
        <taxon>Craniata</taxon>
        <taxon>Vertebrata</taxon>
        <taxon>Euteleostomi</taxon>
        <taxon>Mammalia</taxon>
        <taxon>Eutheria</taxon>
        <taxon>Euarchontoglires</taxon>
        <taxon>Glires</taxon>
        <taxon>Rodentia</taxon>
        <taxon>Myomorpha</taxon>
        <taxon>Muroidea</taxon>
        <taxon>Muridae</taxon>
        <taxon>Murinae</taxon>
        <taxon>Mus</taxon>
        <taxon>Mus</taxon>
    </lineage>
</organism>
<comment type="caution">
    <text evidence="3">It is uncertain whether Met-1 or Met-5 is the initiator.</text>
</comment>
<sequence length="288" mass="32592">MDRSMVKGPLYKQFDLERKSARQAEARLSLRLQRLEIICLYHVKSLAREQRQLQKELQRLQQDIIKKRFSSYVGHEIQKRSKDVVTFLPPTGQRHAVPEPKIRTLKNSVTQEVKTKIPVPSLHDPVLKDTLRSQEHLLSHGERTSCFKEGSPQGQEGEPTNPLKGVDPSKDVSVPCHDQELSTNKTEDSGVSSQDGERGSAPANETRSENASQKPRGDADVQNSPSSVDYAGSFKDERTKPSFLELFEKAKNAHYVRHRVPPESERLLSIGEIFGHKHYSLPRTGETL</sequence>
<reference key="1">
    <citation type="journal article" date="2005" name="Science">
        <title>The transcriptional landscape of the mammalian genome.</title>
        <authorList>
            <person name="Carninci P."/>
            <person name="Kasukawa T."/>
            <person name="Katayama S."/>
            <person name="Gough J."/>
            <person name="Frith M.C."/>
            <person name="Maeda N."/>
            <person name="Oyama R."/>
            <person name="Ravasi T."/>
            <person name="Lenhard B."/>
            <person name="Wells C."/>
            <person name="Kodzius R."/>
            <person name="Shimokawa K."/>
            <person name="Bajic V.B."/>
            <person name="Brenner S.E."/>
            <person name="Batalov S."/>
            <person name="Forrest A.R."/>
            <person name="Zavolan M."/>
            <person name="Davis M.J."/>
            <person name="Wilming L.G."/>
            <person name="Aidinis V."/>
            <person name="Allen J.E."/>
            <person name="Ambesi-Impiombato A."/>
            <person name="Apweiler R."/>
            <person name="Aturaliya R.N."/>
            <person name="Bailey T.L."/>
            <person name="Bansal M."/>
            <person name="Baxter L."/>
            <person name="Beisel K.W."/>
            <person name="Bersano T."/>
            <person name="Bono H."/>
            <person name="Chalk A.M."/>
            <person name="Chiu K.P."/>
            <person name="Choudhary V."/>
            <person name="Christoffels A."/>
            <person name="Clutterbuck D.R."/>
            <person name="Crowe M.L."/>
            <person name="Dalla E."/>
            <person name="Dalrymple B.P."/>
            <person name="de Bono B."/>
            <person name="Della Gatta G."/>
            <person name="di Bernardo D."/>
            <person name="Down T."/>
            <person name="Engstrom P."/>
            <person name="Fagiolini M."/>
            <person name="Faulkner G."/>
            <person name="Fletcher C.F."/>
            <person name="Fukushima T."/>
            <person name="Furuno M."/>
            <person name="Futaki S."/>
            <person name="Gariboldi M."/>
            <person name="Georgii-Hemming P."/>
            <person name="Gingeras T.R."/>
            <person name="Gojobori T."/>
            <person name="Green R.E."/>
            <person name="Gustincich S."/>
            <person name="Harbers M."/>
            <person name="Hayashi Y."/>
            <person name="Hensch T.K."/>
            <person name="Hirokawa N."/>
            <person name="Hill D."/>
            <person name="Huminiecki L."/>
            <person name="Iacono M."/>
            <person name="Ikeo K."/>
            <person name="Iwama A."/>
            <person name="Ishikawa T."/>
            <person name="Jakt M."/>
            <person name="Kanapin A."/>
            <person name="Katoh M."/>
            <person name="Kawasawa Y."/>
            <person name="Kelso J."/>
            <person name="Kitamura H."/>
            <person name="Kitano H."/>
            <person name="Kollias G."/>
            <person name="Krishnan S.P."/>
            <person name="Kruger A."/>
            <person name="Kummerfeld S.K."/>
            <person name="Kurochkin I.V."/>
            <person name="Lareau L.F."/>
            <person name="Lazarevic D."/>
            <person name="Lipovich L."/>
            <person name="Liu J."/>
            <person name="Liuni S."/>
            <person name="McWilliam S."/>
            <person name="Madan Babu M."/>
            <person name="Madera M."/>
            <person name="Marchionni L."/>
            <person name="Matsuda H."/>
            <person name="Matsuzawa S."/>
            <person name="Miki H."/>
            <person name="Mignone F."/>
            <person name="Miyake S."/>
            <person name="Morris K."/>
            <person name="Mottagui-Tabar S."/>
            <person name="Mulder N."/>
            <person name="Nakano N."/>
            <person name="Nakauchi H."/>
            <person name="Ng P."/>
            <person name="Nilsson R."/>
            <person name="Nishiguchi S."/>
            <person name="Nishikawa S."/>
            <person name="Nori F."/>
            <person name="Ohara O."/>
            <person name="Okazaki Y."/>
            <person name="Orlando V."/>
            <person name="Pang K.C."/>
            <person name="Pavan W.J."/>
            <person name="Pavesi G."/>
            <person name="Pesole G."/>
            <person name="Petrovsky N."/>
            <person name="Piazza S."/>
            <person name="Reed J."/>
            <person name="Reid J.F."/>
            <person name="Ring B.Z."/>
            <person name="Ringwald M."/>
            <person name="Rost B."/>
            <person name="Ruan Y."/>
            <person name="Salzberg S.L."/>
            <person name="Sandelin A."/>
            <person name="Schneider C."/>
            <person name="Schoenbach C."/>
            <person name="Sekiguchi K."/>
            <person name="Semple C.A."/>
            <person name="Seno S."/>
            <person name="Sessa L."/>
            <person name="Sheng Y."/>
            <person name="Shibata Y."/>
            <person name="Shimada H."/>
            <person name="Shimada K."/>
            <person name="Silva D."/>
            <person name="Sinclair B."/>
            <person name="Sperling S."/>
            <person name="Stupka E."/>
            <person name="Sugiura K."/>
            <person name="Sultana R."/>
            <person name="Takenaka Y."/>
            <person name="Taki K."/>
            <person name="Tammoja K."/>
            <person name="Tan S.L."/>
            <person name="Tang S."/>
            <person name="Taylor M.S."/>
            <person name="Tegner J."/>
            <person name="Teichmann S.A."/>
            <person name="Ueda H.R."/>
            <person name="van Nimwegen E."/>
            <person name="Verardo R."/>
            <person name="Wei C.L."/>
            <person name="Yagi K."/>
            <person name="Yamanishi H."/>
            <person name="Zabarovsky E."/>
            <person name="Zhu S."/>
            <person name="Zimmer A."/>
            <person name="Hide W."/>
            <person name="Bult C."/>
            <person name="Grimmond S.M."/>
            <person name="Teasdale R.D."/>
            <person name="Liu E.T."/>
            <person name="Brusic V."/>
            <person name="Quackenbush J."/>
            <person name="Wahlestedt C."/>
            <person name="Mattick J.S."/>
            <person name="Hume D.A."/>
            <person name="Kai C."/>
            <person name="Sasaki D."/>
            <person name="Tomaru Y."/>
            <person name="Fukuda S."/>
            <person name="Kanamori-Katayama M."/>
            <person name="Suzuki M."/>
            <person name="Aoki J."/>
            <person name="Arakawa T."/>
            <person name="Iida J."/>
            <person name="Imamura K."/>
            <person name="Itoh M."/>
            <person name="Kato T."/>
            <person name="Kawaji H."/>
            <person name="Kawagashira N."/>
            <person name="Kawashima T."/>
            <person name="Kojima M."/>
            <person name="Kondo S."/>
            <person name="Konno H."/>
            <person name="Nakano K."/>
            <person name="Ninomiya N."/>
            <person name="Nishio T."/>
            <person name="Okada M."/>
            <person name="Plessy C."/>
            <person name="Shibata K."/>
            <person name="Shiraki T."/>
            <person name="Suzuki S."/>
            <person name="Tagami M."/>
            <person name="Waki K."/>
            <person name="Watahiki A."/>
            <person name="Okamura-Oho Y."/>
            <person name="Suzuki H."/>
            <person name="Kawai J."/>
            <person name="Hayashizaki Y."/>
        </authorList>
    </citation>
    <scope>NUCLEOTIDE SEQUENCE [LARGE SCALE MRNA]</scope>
    <source>
        <strain>C57BL/6J</strain>
        <tissue>Spinal cord</tissue>
    </source>
</reference>
<evidence type="ECO:0000255" key="1"/>
<evidence type="ECO:0000256" key="2">
    <source>
        <dbReference type="SAM" id="MobiDB-lite"/>
    </source>
</evidence>
<evidence type="ECO:0000305" key="3"/>
<name>CC190_MOUSE</name>
<accession>Q3URK1</accession>
<dbReference type="EMBL" id="AK141447">
    <property type="protein sequence ID" value="BAE24687.1"/>
    <property type="molecule type" value="mRNA"/>
</dbReference>
<dbReference type="CCDS" id="CCDS15466.1"/>
<dbReference type="RefSeq" id="NP_001028357.1">
    <property type="nucleotide sequence ID" value="NM_001033185.2"/>
</dbReference>
<dbReference type="RefSeq" id="XP_030099545.1">
    <property type="nucleotide sequence ID" value="XM_030243685.2"/>
</dbReference>
<dbReference type="SMR" id="Q3URK1"/>
<dbReference type="FunCoup" id="Q3URK1">
    <property type="interactions" value="1"/>
</dbReference>
<dbReference type="STRING" id="10090.ENSMUSP00000135819"/>
<dbReference type="PhosphoSitePlus" id="Q3URK1"/>
<dbReference type="PaxDb" id="10090-ENSMUSP00000091908"/>
<dbReference type="ProteomicsDB" id="281490"/>
<dbReference type="Antibodypedia" id="34325">
    <property type="antibodies" value="88 antibodies from 14 providers"/>
</dbReference>
<dbReference type="Ensembl" id="ENSMUST00000094348.4">
    <property type="protein sequence ID" value="ENSMUSP00000091908.4"/>
    <property type="gene ID" value="ENSMUSG00000070532.6"/>
</dbReference>
<dbReference type="GeneID" id="78465"/>
<dbReference type="KEGG" id="mmu:78465"/>
<dbReference type="UCSC" id="uc007dlo.1">
    <property type="organism name" value="mouse"/>
</dbReference>
<dbReference type="AGR" id="MGI:1925715"/>
<dbReference type="CTD" id="339512"/>
<dbReference type="MGI" id="MGI:1925715">
    <property type="gene designation" value="Ccdc190"/>
</dbReference>
<dbReference type="VEuPathDB" id="HostDB:ENSMUSG00000070532"/>
<dbReference type="eggNOG" id="ENOG502SAE4">
    <property type="taxonomic scope" value="Eukaryota"/>
</dbReference>
<dbReference type="GeneTree" id="ENSGT00390000014067"/>
<dbReference type="InParanoid" id="Q3URK1"/>
<dbReference type="OMA" id="KVRNAHY"/>
<dbReference type="OrthoDB" id="10050903at2759"/>
<dbReference type="PhylomeDB" id="Q3URK1"/>
<dbReference type="TreeFam" id="TF338067"/>
<dbReference type="BioGRID-ORCS" id="78465">
    <property type="hits" value="1 hit in 44 CRISPR screens"/>
</dbReference>
<dbReference type="PRO" id="PR:Q3URK1"/>
<dbReference type="Proteomes" id="UP000000589">
    <property type="component" value="Chromosome 1"/>
</dbReference>
<dbReference type="RNAct" id="Q3URK1">
    <property type="molecule type" value="protein"/>
</dbReference>
<dbReference type="Bgee" id="ENSMUSG00000070532">
    <property type="expression patterns" value="Expressed in hypothalamus and 31 other cell types or tissues"/>
</dbReference>
<dbReference type="ExpressionAtlas" id="Q3URK1">
    <property type="expression patterns" value="baseline and differential"/>
</dbReference>
<dbReference type="InterPro" id="IPR031525">
    <property type="entry name" value="CC190"/>
</dbReference>
<dbReference type="PANTHER" id="PTHR36871">
    <property type="entry name" value="COILED-COIL DOMAIN-CONTAINING PROTEIN 190"/>
    <property type="match status" value="1"/>
</dbReference>
<dbReference type="PANTHER" id="PTHR36871:SF1">
    <property type="entry name" value="COILED-COIL DOMAIN-CONTAINING PROTEIN 190"/>
    <property type="match status" value="1"/>
</dbReference>
<dbReference type="Pfam" id="PF15768">
    <property type="entry name" value="CC190"/>
    <property type="match status" value="1"/>
</dbReference>